<feature type="initiator methionine" description="Removed" evidence="6">
    <location>
        <position position="1"/>
    </location>
</feature>
<feature type="chain" id="PRO_0000050626" description="Fatty acid metabolism regulator protein">
    <location>
        <begin position="2"/>
        <end position="239"/>
    </location>
</feature>
<feature type="domain" description="HTH gntR-type" evidence="1">
    <location>
        <begin position="6"/>
        <end position="74"/>
    </location>
</feature>
<feature type="DNA-binding region" description="H-T-H motif" evidence="3 4">
    <location>
        <begin position="34"/>
        <end position="69"/>
    </location>
</feature>
<feature type="region of interest" description="Binds acyl-CoA" evidence="12">
    <location>
        <begin position="215"/>
        <end position="230"/>
    </location>
</feature>
<feature type="binding site" evidence="4">
    <location>
        <position position="99"/>
    </location>
    <ligand>
        <name>CoA</name>
        <dbReference type="ChEBI" id="CHEBI:57287"/>
    </ligand>
</feature>
<feature type="binding site" evidence="4">
    <location>
        <begin position="103"/>
        <end position="107"/>
    </location>
    <ligand>
        <name>CoA</name>
        <dbReference type="ChEBI" id="CHEBI:57287"/>
    </ligand>
</feature>
<feature type="binding site" evidence="4">
    <location>
        <position position="213"/>
    </location>
    <ligand>
        <name>CoA</name>
        <dbReference type="ChEBI" id="CHEBI:57287"/>
    </ligand>
</feature>
<feature type="binding site" evidence="4">
    <location>
        <position position="219"/>
    </location>
    <ligand>
        <name>CoA</name>
        <dbReference type="ChEBI" id="CHEBI:57287"/>
    </ligand>
</feature>
<feature type="mutagenesis site" description="Dominant negative to wild-type, decreased DNA-binding." evidence="11">
    <original>A</original>
    <variation>V</variation>
    <location>
        <position position="9"/>
    </location>
</feature>
<feature type="mutagenesis site" description="Dominant negative to wild-type, decreased DNA-binding." evidence="11">
    <original>R</original>
    <variation>C</variation>
    <location>
        <position position="35"/>
    </location>
</feature>
<feature type="mutagenesis site" description="Dominant negative to wild-type." evidence="11">
    <original>R</original>
    <variation>A</variation>
    <location>
        <position position="49"/>
    </location>
</feature>
<feature type="mutagenesis site" description="Dominant negative to wild-type, decreased DNA-binding." evidence="11">
    <original>H</original>
    <variation>Y</variation>
    <location>
        <position position="65"/>
    </location>
</feature>
<feature type="mutagenesis site" description="Dominant negative to wild-type, decreased DNA-binding." evidence="11">
    <original>G</original>
    <variation>D</variation>
    <location>
        <position position="66"/>
    </location>
</feature>
<feature type="mutagenesis site" description="Dominant negative to wild-type, decreased DNA-binding." evidence="11">
    <original>K</original>
    <variation>S</variation>
    <location>
        <position position="67"/>
    </location>
</feature>
<feature type="mutagenesis site" description="Loss of FadR repression." evidence="9">
    <original>Y</original>
    <variation>A</variation>
    <location>
        <position position="215"/>
    </location>
</feature>
<feature type="mutagenesis site" description="Super-repressor, non-inducible phenotype, cells cannot use long chain fatty acids as carbon source." evidence="9">
    <original>G</original>
    <variation>A</variation>
    <location>
        <position position="216"/>
    </location>
</feature>
<feature type="mutagenesis site" description="Reduced ability to repress." evidence="9">
    <original>E</original>
    <variation>A</variation>
    <location>
        <position position="218"/>
    </location>
</feature>
<feature type="mutagenesis site" description="Reduced ability to repress." evidence="9">
    <original>S</original>
    <variation>A</variation>
    <location>
        <position position="219"/>
    </location>
</feature>
<feature type="mutagenesis site" description="Super-repressor, non-inducible phenotype, cells cannot use long chain fatty acids as carbon source. Protein has 10-fold decreased affinity for C18:1-CoA, can still bind fabA DNA and alter transcription." evidence="9">
    <original>S</original>
    <variation>N</variation>
    <location>
        <position position="219"/>
    </location>
</feature>
<feature type="mutagenesis site" description="Loss of FadR repression." evidence="9">
    <original>G</original>
    <variation>A</variation>
    <location>
        <position position="220"/>
    </location>
</feature>
<feature type="mutagenesis site" description="Super-repressor, non-inducible phenotype, cells cannot use long chain fatty acids as carbon source." evidence="9">
    <original>W</original>
    <variation>A</variation>
    <location>
        <position position="223"/>
    </location>
</feature>
<feature type="mutagenesis site" description="Loss of FadR repression." evidence="9">
    <original>Q</original>
    <variation>A</variation>
    <location>
        <position position="227"/>
    </location>
</feature>
<feature type="mutagenesis site" description="Reduced ability to repress." evidence="9">
    <original>K</original>
    <variation>A</variation>
    <location>
        <position position="228"/>
    </location>
</feature>
<feature type="mutagenesis site" description="Loss of FadR repression." evidence="9">
    <original>N</original>
    <variation>A</variation>
    <location>
        <position position="229"/>
    </location>
</feature>
<feature type="helix" evidence="13">
    <location>
        <begin position="8"/>
        <end position="21"/>
    </location>
</feature>
<feature type="helix" evidence="13">
    <location>
        <begin position="34"/>
        <end position="41"/>
    </location>
</feature>
<feature type="helix" evidence="13">
    <location>
        <begin position="45"/>
        <end position="57"/>
    </location>
</feature>
<feature type="strand" evidence="13">
    <location>
        <begin position="60"/>
        <end position="64"/>
    </location>
</feature>
<feature type="strand" evidence="13">
    <location>
        <begin position="67"/>
        <end position="71"/>
    </location>
</feature>
<feature type="helix" evidence="13">
    <location>
        <begin position="74"/>
        <end position="77"/>
    </location>
</feature>
<feature type="helix" evidence="13">
    <location>
        <begin position="80"/>
        <end position="82"/>
    </location>
</feature>
<feature type="helix" evidence="13">
    <location>
        <begin position="83"/>
        <end position="89"/>
    </location>
</feature>
<feature type="helix" evidence="13">
    <location>
        <begin position="91"/>
        <end position="93"/>
    </location>
</feature>
<feature type="helix" evidence="13">
    <location>
        <begin position="94"/>
        <end position="119"/>
    </location>
</feature>
<feature type="helix" evidence="13">
    <location>
        <begin position="121"/>
        <end position="129"/>
    </location>
</feature>
<feature type="turn" evidence="13">
    <location>
        <begin position="130"/>
        <end position="133"/>
    </location>
</feature>
<feature type="helix" evidence="13">
    <location>
        <begin position="138"/>
        <end position="155"/>
    </location>
</feature>
<feature type="helix" evidence="13">
    <location>
        <begin position="159"/>
        <end position="179"/>
    </location>
</feature>
<feature type="helix" evidence="13">
    <location>
        <begin position="183"/>
        <end position="202"/>
    </location>
</feature>
<feature type="helix" evidence="13">
    <location>
        <begin position="206"/>
        <end position="227"/>
    </location>
</feature>
<accession>P0A8V6</accession>
<accession>P09371</accession>
<accession>P76827</accession>
<name>FADR_ECOLI</name>
<sequence length="239" mass="26969">MVIKAQSPAGFAEEYIIESIWNNRFPPGTILPAERELSELIGVTRTTLREVLQRLARDGWLTIQHGKPTKVNNFWETSGLNILETLARLDHESVPQLIDNLLSVRTNISTIFIRTAFRQHPDKAQEVLATANEVADHADAFAELDYNIFRGLAFASGNPIYGLILNGMKGLYTRIGRHYFANPEARSLALGFYHKLSALCSEGAHDQVYETVRRYGHESGEIWHRMQKNLPGDLAIQGR</sequence>
<evidence type="ECO:0000255" key="1">
    <source>
        <dbReference type="HAMAP-Rule" id="MF_00696"/>
    </source>
</evidence>
<evidence type="ECO:0000269" key="2">
    <source>
    </source>
</evidence>
<evidence type="ECO:0000269" key="3">
    <source>
    </source>
</evidence>
<evidence type="ECO:0000269" key="4">
    <source>
    </source>
</evidence>
<evidence type="ECO:0000269" key="5">
    <source>
    </source>
</evidence>
<evidence type="ECO:0000269" key="6">
    <source>
    </source>
</evidence>
<evidence type="ECO:0000269" key="7">
    <source>
    </source>
</evidence>
<evidence type="ECO:0000269" key="8">
    <source>
    </source>
</evidence>
<evidence type="ECO:0000269" key="9">
    <source>
    </source>
</evidence>
<evidence type="ECO:0000269" key="10">
    <source>
    </source>
</evidence>
<evidence type="ECO:0000269" key="11">
    <source>
    </source>
</evidence>
<evidence type="ECO:0000305" key="12">
    <source>
    </source>
</evidence>
<evidence type="ECO:0007829" key="13">
    <source>
        <dbReference type="PDB" id="1HW1"/>
    </source>
</evidence>
<reference key="1">
    <citation type="journal article" date="1988" name="Nucleic Acids Res.">
        <title>Nucleotide sequence of the fadR gene, a multifunctional regulator of fatty acid metabolism in Escherichia coli.</title>
        <authorList>
            <person name="Dirusso C.C."/>
        </authorList>
    </citation>
    <scope>NUCLEOTIDE SEQUENCE [GENOMIC DNA]</scope>
    <source>
        <strain>K12</strain>
    </source>
</reference>
<reference key="2">
    <citation type="submission" date="1995-09" db="EMBL/GenBank/DDBJ databases">
        <authorList>
            <person name="Dirusso C.C."/>
        </authorList>
    </citation>
    <scope>SEQUENCE REVISION TO 147</scope>
    <source>
        <strain>K12</strain>
    </source>
</reference>
<reference key="3">
    <citation type="journal article" date="1996" name="DNA Res.">
        <title>A 718-kb DNA sequence of the Escherichia coli K-12 genome corresponding to the 12.7-28.0 min region on the linkage map.</title>
        <authorList>
            <person name="Oshima T."/>
            <person name="Aiba H."/>
            <person name="Baba T."/>
            <person name="Fujita K."/>
            <person name="Hayashi K."/>
            <person name="Honjo A."/>
            <person name="Ikemoto K."/>
            <person name="Inada T."/>
            <person name="Itoh T."/>
            <person name="Kajihara M."/>
            <person name="Kanai K."/>
            <person name="Kashimoto K."/>
            <person name="Kimura S."/>
            <person name="Kitagawa M."/>
            <person name="Makino K."/>
            <person name="Masuda S."/>
            <person name="Miki T."/>
            <person name="Mizobuchi K."/>
            <person name="Mori H."/>
            <person name="Motomura K."/>
            <person name="Nakamura Y."/>
            <person name="Nashimoto H."/>
            <person name="Nishio Y."/>
            <person name="Saito N."/>
            <person name="Sampei G."/>
            <person name="Seki Y."/>
            <person name="Tagami H."/>
            <person name="Takemoto K."/>
            <person name="Wada C."/>
            <person name="Yamamoto Y."/>
            <person name="Yano M."/>
            <person name="Horiuchi T."/>
        </authorList>
    </citation>
    <scope>NUCLEOTIDE SEQUENCE [LARGE SCALE GENOMIC DNA]</scope>
    <source>
        <strain>K12 / W3110 / ATCC 27325 / DSM 5911</strain>
    </source>
</reference>
<reference key="4">
    <citation type="journal article" date="1997" name="Science">
        <title>The complete genome sequence of Escherichia coli K-12.</title>
        <authorList>
            <person name="Blattner F.R."/>
            <person name="Plunkett G. III"/>
            <person name="Bloch C.A."/>
            <person name="Perna N.T."/>
            <person name="Burland V."/>
            <person name="Riley M."/>
            <person name="Collado-Vides J."/>
            <person name="Glasner J.D."/>
            <person name="Rode C.K."/>
            <person name="Mayhew G.F."/>
            <person name="Gregor J."/>
            <person name="Davis N.W."/>
            <person name="Kirkpatrick H.A."/>
            <person name="Goeden M.A."/>
            <person name="Rose D.J."/>
            <person name="Mau B."/>
            <person name="Shao Y."/>
        </authorList>
    </citation>
    <scope>NUCLEOTIDE SEQUENCE [LARGE SCALE GENOMIC DNA]</scope>
    <source>
        <strain>K12 / MG1655 / ATCC 47076</strain>
    </source>
</reference>
<reference key="5">
    <citation type="journal article" date="2006" name="Mol. Syst. Biol.">
        <title>Highly accurate genome sequences of Escherichia coli K-12 strains MG1655 and W3110.</title>
        <authorList>
            <person name="Hayashi K."/>
            <person name="Morooka N."/>
            <person name="Yamamoto Y."/>
            <person name="Fujita K."/>
            <person name="Isono K."/>
            <person name="Choi S."/>
            <person name="Ohtsubo E."/>
            <person name="Baba T."/>
            <person name="Wanner B.L."/>
            <person name="Mori H."/>
            <person name="Horiuchi T."/>
        </authorList>
    </citation>
    <scope>NUCLEOTIDE SEQUENCE [LARGE SCALE GENOMIC DNA]</scope>
    <source>
        <strain>K12 / W3110 / ATCC 27325 / DSM 5911</strain>
    </source>
</reference>
<reference key="6">
    <citation type="journal article" date="1992" name="J. Biol. Chem.">
        <title>Characterization of FadR, a global transcriptional regulator of fatty acid metabolism in Escherichia coli. Interaction with the fadB promoter is prevented by long chain fatty acyl coenzyme A.</title>
        <authorList>
            <person name="DiRusso C.C."/>
            <person name="Heimert T.L."/>
            <person name="Metzger A.K."/>
        </authorList>
    </citation>
    <scope>PROTEIN SEQUENCE OF 2-11</scope>
    <scope>FUNCTION</scope>
    <scope>ACTIVITY REGULATION</scope>
    <scope>DNA-BINDING</scope>
</reference>
<reference key="7">
    <citation type="journal article" date="1993" name="Mol. Microbiol.">
        <title>Regulation of transcription of genes required for fatty acid transport and unsaturated fatty acid biosynthesis in Escherichia coli by FadR.</title>
        <authorList>
            <person name="DiRusso C.C."/>
            <person name="Metzger A.K."/>
            <person name="Heimert T.L."/>
        </authorList>
    </citation>
    <scope>FUNCTION</scope>
    <scope>DNA-BINDING</scope>
</reference>
<reference key="8">
    <citation type="journal article" date="1995" name="J. Biol. Chem.">
        <title>Analysis of acyl coenzyme A binding to the transcription factor FadR and identification of amino acid residues in the carboxyl terminus required for ligand binding.</title>
        <authorList>
            <person name="Raman N."/>
            <person name="DiRusso C.C."/>
        </authorList>
    </citation>
    <scope>FUNCTION</scope>
    <scope>ACTIVITY REGULATION VIA ACYL-COA-BINDING</scope>
    <scope>INDUCTION</scope>
    <scope>DOMAIN</scope>
    <scope>MUTAGENESIS OF TYR-215; GLY-216; GLU-218; SER-219; GLY-220; TRP-223; GLN-227; LYS-228 AND ASN-229</scope>
    <scope>DNA-BINDING</scope>
</reference>
<reference key="9">
    <citation type="journal article" date="1997" name="J. Biol. Chem.">
        <title>Characterization of the fatty acid-responsive transcription factor FadR. Biochemical and genetic analyses of the native conformation and functional domains.</title>
        <authorList>
            <person name="Raman N."/>
            <person name="Black P.N."/>
            <person name="Dirusso C.C."/>
        </authorList>
    </citation>
    <scope>FUNCTION</scope>
    <scope>SUBUNIT</scope>
    <scope>DOMAIN</scope>
    <scope>MUTAGENESIS OF ALA-9; ARG-35; ARG-49; HIS-65; GLY-66 AND LYS-67</scope>
</reference>
<reference key="10">
    <citation type="journal article" date="2002" name="J. Biol. Chem.">
        <title>The FabR (YijC) transcription factor regulates unsaturated fatty acid biosynthesis in Escherichia coli.</title>
        <authorList>
            <person name="Zhang Y.-M."/>
            <person name="Marrakchi H."/>
            <person name="Rock C.O."/>
        </authorList>
    </citation>
    <scope>FUNCTION</scope>
    <scope>DISRUPTION PHENOTYPE</scope>
</reference>
<reference key="11">
    <citation type="journal article" date="2009" name="J. Biol. Chem.">
        <title>Transcriptional regulation of membrane lipid homeostasis in Escherichia coli.</title>
        <authorList>
            <person name="Zhu K."/>
            <person name="Zhang Y.M."/>
            <person name="Rock C.O."/>
        </authorList>
    </citation>
    <scope>FUNCTION</scope>
    <scope>ACTIVITY REGULATION</scope>
    <source>
        <strain>K12</strain>
    </source>
</reference>
<reference key="12">
    <citation type="journal article" date="2011" name="Mol. Microbiol.">
        <title>Complex binding of the FabR repressor of bacterial unsaturated fatty acid biosynthesis to its cognate promoters.</title>
        <authorList>
            <person name="Feng Y."/>
            <person name="Cronan J.E."/>
        </authorList>
    </citation>
    <scope>FUNCTION</scope>
    <scope>DISRUPTION PHENOTYPE</scope>
    <source>
        <strain>K12</strain>
    </source>
</reference>
<reference key="13">
    <citation type="journal article" date="2000" name="EMBO J.">
        <title>Crystal structure of FadR, a fatty acid-responsive transcription factor with a novel acyl coenzyme A-binding fold.</title>
        <authorList>
            <person name="van Aalten D.M."/>
            <person name="DiRusso C.C."/>
            <person name="Knudsen J."/>
            <person name="Wierenga R.K."/>
        </authorList>
    </citation>
    <scope>X-RAY CRYSTALLOGRAPHY (2.00 ANGSTROMS)</scope>
    <scope>SUBUNIT</scope>
</reference>
<reference key="14">
    <citation type="journal article" date="2001" name="EMBO J.">
        <title>The structural basis of acyl coenzyme A-dependent regulation of the transcription factor FadR.</title>
        <authorList>
            <person name="van Aalten D.M."/>
            <person name="DiRusso C.C."/>
            <person name="Knudsen J."/>
        </authorList>
    </citation>
    <scope>X-RAY CRYSTALLOGRAPHY (2.1 ANGSTROMS) IN COMPLEX WITH COENZYME A OR DNA</scope>
    <scope>SUBUNIT</scope>
    <scope>DOMAIN</scope>
</reference>
<reference key="15">
    <citation type="journal article" date="2001" name="J. Biol. Chem.">
        <title>The FadR.DNA complex. Transcriptional control of fatty acid metabolism in Escherichia coli.</title>
        <authorList>
            <person name="Xu Y."/>
            <person name="Heath R.J."/>
            <person name="Li Z."/>
            <person name="Rock C.O."/>
            <person name="White S.W."/>
        </authorList>
    </citation>
    <scope>X-RAY CRYSTALLOGRAPHY (1.5 ANGSTROMS) OF APOPROTEIN OR IN COMPLEX WITH DNA</scope>
    <scope>SUBUNIT</scope>
</reference>
<keyword id="KW-0002">3D-structure</keyword>
<keyword id="KW-0010">Activator</keyword>
<keyword id="KW-0963">Cytoplasm</keyword>
<keyword id="KW-0903">Direct protein sequencing</keyword>
<keyword id="KW-0238">DNA-binding</keyword>
<keyword id="KW-0276">Fatty acid metabolism</keyword>
<keyword id="KW-0443">Lipid metabolism</keyword>
<keyword id="KW-1185">Reference proteome</keyword>
<keyword id="KW-0678">Repressor</keyword>
<keyword id="KW-0804">Transcription</keyword>
<keyword id="KW-0805">Transcription regulation</keyword>
<dbReference type="EMBL" id="X08087">
    <property type="protein sequence ID" value="CAA30881.1"/>
    <property type="molecule type" value="Genomic_DNA"/>
</dbReference>
<dbReference type="EMBL" id="U00096">
    <property type="protein sequence ID" value="AAC74271.1"/>
    <property type="molecule type" value="Genomic_DNA"/>
</dbReference>
<dbReference type="EMBL" id="AP009048">
    <property type="protein sequence ID" value="BAA36042.1"/>
    <property type="molecule type" value="Genomic_DNA"/>
</dbReference>
<dbReference type="PIR" id="H64864">
    <property type="entry name" value="H64864"/>
</dbReference>
<dbReference type="RefSeq" id="NP_415705.1">
    <property type="nucleotide sequence ID" value="NC_000913.3"/>
</dbReference>
<dbReference type="RefSeq" id="WP_000234823.1">
    <property type="nucleotide sequence ID" value="NZ_STEB01000023.1"/>
</dbReference>
<dbReference type="PDB" id="1E2X">
    <property type="method" value="X-ray"/>
    <property type="resolution" value="2.00 A"/>
    <property type="chains" value="A=1-239"/>
</dbReference>
<dbReference type="PDB" id="1H9G">
    <property type="method" value="X-ray"/>
    <property type="resolution" value="2.10 A"/>
    <property type="chains" value="A=1-239"/>
</dbReference>
<dbReference type="PDB" id="1H9T">
    <property type="method" value="X-ray"/>
    <property type="resolution" value="3.25 A"/>
    <property type="chains" value="A/B=1-239"/>
</dbReference>
<dbReference type="PDB" id="1HW1">
    <property type="method" value="X-ray"/>
    <property type="resolution" value="1.50 A"/>
    <property type="chains" value="A/B=1-239"/>
</dbReference>
<dbReference type="PDB" id="1HW2">
    <property type="method" value="X-ray"/>
    <property type="resolution" value="3.25 A"/>
    <property type="chains" value="A/B=1-239"/>
</dbReference>
<dbReference type="PDBsum" id="1E2X"/>
<dbReference type="PDBsum" id="1H9G"/>
<dbReference type="PDBsum" id="1H9T"/>
<dbReference type="PDBsum" id="1HW1"/>
<dbReference type="PDBsum" id="1HW2"/>
<dbReference type="SMR" id="P0A8V6"/>
<dbReference type="BioGRID" id="4260102">
    <property type="interactions" value="130"/>
</dbReference>
<dbReference type="DIP" id="DIP-9564N"/>
<dbReference type="FunCoup" id="P0A8V6">
    <property type="interactions" value="130"/>
</dbReference>
<dbReference type="IntAct" id="P0A8V6">
    <property type="interactions" value="2"/>
</dbReference>
<dbReference type="STRING" id="511145.b1187"/>
<dbReference type="DrugBank" id="DB08231">
    <property type="generic name" value="Myristic acid"/>
</dbReference>
<dbReference type="jPOST" id="P0A8V6"/>
<dbReference type="PaxDb" id="511145-b1187"/>
<dbReference type="EnsemblBacteria" id="AAC74271">
    <property type="protein sequence ID" value="AAC74271"/>
    <property type="gene ID" value="b1187"/>
</dbReference>
<dbReference type="GeneID" id="93776245"/>
<dbReference type="GeneID" id="948652"/>
<dbReference type="KEGG" id="ecj:JW1176"/>
<dbReference type="KEGG" id="eco:b1187"/>
<dbReference type="KEGG" id="ecoc:C3026_06990"/>
<dbReference type="PATRIC" id="fig|1411691.4.peg.1100"/>
<dbReference type="EchoBASE" id="EB0277"/>
<dbReference type="eggNOG" id="COG2186">
    <property type="taxonomic scope" value="Bacteria"/>
</dbReference>
<dbReference type="HOGENOM" id="CLU_017584_9_4_6"/>
<dbReference type="InParanoid" id="P0A8V6"/>
<dbReference type="OMA" id="TRVLDWR"/>
<dbReference type="OrthoDB" id="5683977at2"/>
<dbReference type="PhylomeDB" id="P0A8V6"/>
<dbReference type="BioCyc" id="EcoCyc:PD01520"/>
<dbReference type="EvolutionaryTrace" id="P0A8V6"/>
<dbReference type="PRO" id="PR:P0A8V6"/>
<dbReference type="Proteomes" id="UP000000625">
    <property type="component" value="Chromosome"/>
</dbReference>
<dbReference type="GO" id="GO:0005829">
    <property type="term" value="C:cytosol"/>
    <property type="evidence" value="ECO:0000314"/>
    <property type="project" value="EcoCyc"/>
</dbReference>
<dbReference type="GO" id="GO:0003677">
    <property type="term" value="F:DNA binding"/>
    <property type="evidence" value="ECO:0007669"/>
    <property type="project" value="UniProtKB-KW"/>
</dbReference>
<dbReference type="GO" id="GO:0003700">
    <property type="term" value="F:DNA-binding transcription factor activity"/>
    <property type="evidence" value="ECO:0000250"/>
    <property type="project" value="EcoCyc"/>
</dbReference>
<dbReference type="GO" id="GO:0000062">
    <property type="term" value="F:fatty-acyl-CoA binding"/>
    <property type="evidence" value="ECO:0007669"/>
    <property type="project" value="InterPro"/>
</dbReference>
<dbReference type="GO" id="GO:0042803">
    <property type="term" value="F:protein homodimerization activity"/>
    <property type="evidence" value="ECO:0000314"/>
    <property type="project" value="EcoCyc"/>
</dbReference>
<dbReference type="GO" id="GO:0006631">
    <property type="term" value="P:fatty acid metabolic process"/>
    <property type="evidence" value="ECO:0007669"/>
    <property type="project" value="UniProtKB-KW"/>
</dbReference>
<dbReference type="GO" id="GO:0045892">
    <property type="term" value="P:negative regulation of DNA-templated transcription"/>
    <property type="evidence" value="ECO:0000315"/>
    <property type="project" value="EcoCyc"/>
</dbReference>
<dbReference type="GO" id="GO:0045893">
    <property type="term" value="P:positive regulation of DNA-templated transcription"/>
    <property type="evidence" value="ECO:0000250"/>
    <property type="project" value="EcoCyc"/>
</dbReference>
<dbReference type="GO" id="GO:0045723">
    <property type="term" value="P:positive regulation of fatty acid biosynthetic process"/>
    <property type="evidence" value="ECO:0000315"/>
    <property type="project" value="CACAO"/>
</dbReference>
<dbReference type="GO" id="GO:0019217">
    <property type="term" value="P:regulation of fatty acid metabolic process"/>
    <property type="evidence" value="ECO:0000316"/>
    <property type="project" value="CACAO"/>
</dbReference>
<dbReference type="CDD" id="cd07377">
    <property type="entry name" value="WHTH_GntR"/>
    <property type="match status" value="1"/>
</dbReference>
<dbReference type="FunFam" id="1.10.10.10:FF:000036">
    <property type="entry name" value="Fatty acid metabolism regulator protein"/>
    <property type="match status" value="1"/>
</dbReference>
<dbReference type="FunFam" id="1.20.120.530:FF:000003">
    <property type="entry name" value="Fatty acid metabolism regulator protein"/>
    <property type="match status" value="1"/>
</dbReference>
<dbReference type="Gene3D" id="1.20.120.530">
    <property type="entry name" value="GntR ligand-binding domain-like"/>
    <property type="match status" value="1"/>
</dbReference>
<dbReference type="Gene3D" id="1.10.10.10">
    <property type="entry name" value="Winged helix-like DNA-binding domain superfamily/Winged helix DNA-binding domain"/>
    <property type="match status" value="1"/>
</dbReference>
<dbReference type="HAMAP" id="MF_00696">
    <property type="entry name" value="HTH_FadR"/>
    <property type="match status" value="1"/>
</dbReference>
<dbReference type="InterPro" id="IPR014178">
    <property type="entry name" value="FA-response_TF_FadR"/>
</dbReference>
<dbReference type="InterPro" id="IPR028374">
    <property type="entry name" value="FadR_C"/>
</dbReference>
<dbReference type="InterPro" id="IPR008920">
    <property type="entry name" value="TF_FadR/GntR_C"/>
</dbReference>
<dbReference type="InterPro" id="IPR000524">
    <property type="entry name" value="Tscrpt_reg_HTH_GntR"/>
</dbReference>
<dbReference type="InterPro" id="IPR036388">
    <property type="entry name" value="WH-like_DNA-bd_sf"/>
</dbReference>
<dbReference type="InterPro" id="IPR036390">
    <property type="entry name" value="WH_DNA-bd_sf"/>
</dbReference>
<dbReference type="NCBIfam" id="TIGR02812">
    <property type="entry name" value="fadR_gamma"/>
    <property type="match status" value="1"/>
</dbReference>
<dbReference type="NCBIfam" id="NF003444">
    <property type="entry name" value="PRK04984.1"/>
    <property type="match status" value="1"/>
</dbReference>
<dbReference type="PANTHER" id="PTHR43537:SF52">
    <property type="entry name" value="FATTY ACID METABOLISM REGULATOR PROTEIN"/>
    <property type="match status" value="1"/>
</dbReference>
<dbReference type="PANTHER" id="PTHR43537">
    <property type="entry name" value="TRANSCRIPTIONAL REGULATOR, GNTR FAMILY"/>
    <property type="match status" value="1"/>
</dbReference>
<dbReference type="Pfam" id="PF07840">
    <property type="entry name" value="FadR_C"/>
    <property type="match status" value="1"/>
</dbReference>
<dbReference type="Pfam" id="PF00392">
    <property type="entry name" value="GntR"/>
    <property type="match status" value="1"/>
</dbReference>
<dbReference type="PRINTS" id="PR00035">
    <property type="entry name" value="HTHGNTR"/>
</dbReference>
<dbReference type="SMART" id="SM00345">
    <property type="entry name" value="HTH_GNTR"/>
    <property type="match status" value="1"/>
</dbReference>
<dbReference type="SUPFAM" id="SSF48008">
    <property type="entry name" value="GntR ligand-binding domain-like"/>
    <property type="match status" value="1"/>
</dbReference>
<dbReference type="SUPFAM" id="SSF46785">
    <property type="entry name" value="Winged helix' DNA-binding domain"/>
    <property type="match status" value="1"/>
</dbReference>
<dbReference type="PROSITE" id="PS50949">
    <property type="entry name" value="HTH_GNTR"/>
    <property type="match status" value="1"/>
</dbReference>
<protein>
    <recommendedName>
        <fullName evidence="1">Fatty acid metabolism regulator protein</fullName>
    </recommendedName>
</protein>
<organism>
    <name type="scientific">Escherichia coli (strain K12)</name>
    <dbReference type="NCBI Taxonomy" id="83333"/>
    <lineage>
        <taxon>Bacteria</taxon>
        <taxon>Pseudomonadati</taxon>
        <taxon>Pseudomonadota</taxon>
        <taxon>Gammaproteobacteria</taxon>
        <taxon>Enterobacterales</taxon>
        <taxon>Enterobacteriaceae</taxon>
        <taxon>Escherichia</taxon>
    </lineage>
</organism>
<gene>
    <name evidence="1" type="primary">fadR</name>
    <name type="synonym">oleR</name>
    <name type="synonym">thdB</name>
    <name type="ordered locus">b1187</name>
    <name type="ordered locus">JW1176</name>
</gene>
<comment type="function">
    <text evidence="5 6 7 8 9 10 11">Multifunctional regulator of fatty acid metabolism (PubMed:11859088, PubMed:1569108, PubMed:19854834, PubMed:21276098, PubMed:8446033, PubMed:9388199). Represses transcription of at least eight genes required for fatty acid transport and beta-oxidation including fadA, fadB, fadD, fadL and fadE (PubMed:9388199). Activates transcription of at least three genes required for unsaturated fatty acid biosynthesis: fabA, fabB and iclR, the gene encoding the transcriptional regulator of the aceBAK operon encoding the glyoxylate shunt enzymes (PubMed:9388199).</text>
</comment>
<comment type="activity regulation">
    <text evidence="6 7">Binding of FadR to DNA is specifically inhibited by long chain acyl-CoA compounds, but not by long chain fatty acids (PubMed:1569108). Long chain acyl-CoA binds directly to the protein preventing it from binding DNA, which derepresses genes for beta-oxidation and prevents activation of genes for unsaturated fatty acid biosynthesis (PubMed:19854834, PubMed:7836365).</text>
</comment>
<comment type="subunit">
    <text evidence="2 3 4 11">Homodimer (PubMed:11013219, PubMed:11279025, PubMed:11296236, PubMed:9388199). Binding of acyl-CoA alters conformation of the dimer, separating the DNA-binding regions and disrupting DNA-binding (PubMed:11296236).</text>
</comment>
<comment type="subcellular location">
    <subcellularLocation>
        <location evidence="1">Cytoplasm</location>
    </subcellularLocation>
</comment>
<comment type="induction">
    <text evidence="9">By growth in the presence of long chain fatty acids (C14-C18) (PubMed:7836365).</text>
</comment>
<comment type="domain">
    <text evidence="4 9 11">The N-terminus binds DNA, the C-terminus (residues 83-239) is responsible for dimerization (PubMed:9388199). The C-terminal domain binds acyl-CoA (PubMed:11296236, PubMed:7836365).</text>
</comment>
<comment type="disruption phenotype">
    <text evidence="5 8">Decreased transcription of fabA, low to no change in levels of fabB (PubMed:11859088, PubMed:21276098). Up-regulation of genes involved in beta-oxidation (fatty acid degradation, at least fadA, fadB, fadE, fadH, fadI and fadJ) (PubMed:11859088). Increased levels of fatty acids; double fadR-fabR deletions have the same phenotype, suggesting a functional fadR gene is required for fabR function (PubMed:11859088).</text>
</comment>
<proteinExistence type="evidence at protein level"/>